<reference key="1">
    <citation type="journal article" date="2008" name="Genome Res.">
        <title>Genome sequence of the beta-rhizobium Cupriavidus taiwanensis and comparative genomics of rhizobia.</title>
        <authorList>
            <person name="Amadou C."/>
            <person name="Pascal G."/>
            <person name="Mangenot S."/>
            <person name="Glew M."/>
            <person name="Bontemps C."/>
            <person name="Capela D."/>
            <person name="Carrere S."/>
            <person name="Cruveiller S."/>
            <person name="Dossat C."/>
            <person name="Lajus A."/>
            <person name="Marchetti M."/>
            <person name="Poinsot V."/>
            <person name="Rouy Z."/>
            <person name="Servin B."/>
            <person name="Saad M."/>
            <person name="Schenowitz C."/>
            <person name="Barbe V."/>
            <person name="Batut J."/>
            <person name="Medigue C."/>
            <person name="Masson-Boivin C."/>
        </authorList>
    </citation>
    <scope>NUCLEOTIDE SEQUENCE [LARGE SCALE GENOMIC DNA]</scope>
    <source>
        <strain>DSM 17343 / BCRC 17206 / CCUG 44338 / CIP 107171 / LMG 19424 / R1</strain>
    </source>
</reference>
<organism>
    <name type="scientific">Cupriavidus taiwanensis (strain DSM 17343 / BCRC 17206 / CCUG 44338 / CIP 107171 / LMG 19424 / R1)</name>
    <name type="common">Ralstonia taiwanensis (strain LMG 19424)</name>
    <dbReference type="NCBI Taxonomy" id="977880"/>
    <lineage>
        <taxon>Bacteria</taxon>
        <taxon>Pseudomonadati</taxon>
        <taxon>Pseudomonadota</taxon>
        <taxon>Betaproteobacteria</taxon>
        <taxon>Burkholderiales</taxon>
        <taxon>Burkholderiaceae</taxon>
        <taxon>Cupriavidus</taxon>
    </lineage>
</organism>
<evidence type="ECO:0000255" key="1">
    <source>
        <dbReference type="HAMAP-Rule" id="MF_01187"/>
    </source>
</evidence>
<sequence length="67" mass="7374">MDNRLLEILVCPLCKGKLEYDRAAQELICHADKLAYPIRDGIPVMLADEARQSVPGRVIEPDAPAGN</sequence>
<feature type="chain" id="PRO_1000138300" description="UPF0434 protein RALTA_A0561">
    <location>
        <begin position="1"/>
        <end position="67"/>
    </location>
</feature>
<gene>
    <name type="ordered locus">RALTA_A0561</name>
</gene>
<protein>
    <recommendedName>
        <fullName evidence="1">UPF0434 protein RALTA_A0561</fullName>
    </recommendedName>
</protein>
<proteinExistence type="inferred from homology"/>
<name>Y561_CUPTR</name>
<comment type="similarity">
    <text evidence="1">Belongs to the UPF0434 family.</text>
</comment>
<dbReference type="EMBL" id="CU633749">
    <property type="protein sequence ID" value="CAQ68545.1"/>
    <property type="molecule type" value="Genomic_DNA"/>
</dbReference>
<dbReference type="RefSeq" id="WP_012351886.1">
    <property type="nucleotide sequence ID" value="NC_010528.1"/>
</dbReference>
<dbReference type="SMR" id="B3R0X9"/>
<dbReference type="GeneID" id="29763248"/>
<dbReference type="KEGG" id="cti:RALTA_A0561"/>
<dbReference type="eggNOG" id="COG2835">
    <property type="taxonomic scope" value="Bacteria"/>
</dbReference>
<dbReference type="HOGENOM" id="CLU_155659_3_0_4"/>
<dbReference type="BioCyc" id="CTAI977880:RALTA_RS02745-MONOMER"/>
<dbReference type="Proteomes" id="UP000001692">
    <property type="component" value="Chromosome 1"/>
</dbReference>
<dbReference type="GO" id="GO:0005829">
    <property type="term" value="C:cytosol"/>
    <property type="evidence" value="ECO:0007669"/>
    <property type="project" value="TreeGrafter"/>
</dbReference>
<dbReference type="FunFam" id="2.20.25.10:FF:000002">
    <property type="entry name" value="UPF0434 protein YcaR"/>
    <property type="match status" value="1"/>
</dbReference>
<dbReference type="Gene3D" id="2.20.25.10">
    <property type="match status" value="1"/>
</dbReference>
<dbReference type="HAMAP" id="MF_01187">
    <property type="entry name" value="UPF0434"/>
    <property type="match status" value="1"/>
</dbReference>
<dbReference type="InterPro" id="IPR005651">
    <property type="entry name" value="Trm112-like"/>
</dbReference>
<dbReference type="PANTHER" id="PTHR33505:SF4">
    <property type="entry name" value="PROTEIN PREY, MITOCHONDRIAL"/>
    <property type="match status" value="1"/>
</dbReference>
<dbReference type="PANTHER" id="PTHR33505">
    <property type="entry name" value="ZGC:162634"/>
    <property type="match status" value="1"/>
</dbReference>
<dbReference type="Pfam" id="PF03966">
    <property type="entry name" value="Trm112p"/>
    <property type="match status" value="1"/>
</dbReference>
<dbReference type="SUPFAM" id="SSF158997">
    <property type="entry name" value="Trm112p-like"/>
    <property type="match status" value="1"/>
</dbReference>
<accession>B3R0X9</accession>